<dbReference type="EMBL" id="CP000655">
    <property type="protein sequence ID" value="ABP33836.1"/>
    <property type="molecule type" value="Genomic_DNA"/>
</dbReference>
<dbReference type="RefSeq" id="WP_011902461.1">
    <property type="nucleotide sequence ID" value="NC_009379.1"/>
</dbReference>
<dbReference type="SMR" id="A4SWH2"/>
<dbReference type="GeneID" id="31480975"/>
<dbReference type="KEGG" id="pnu:Pnuc_0618"/>
<dbReference type="eggNOG" id="COG0217">
    <property type="taxonomic scope" value="Bacteria"/>
</dbReference>
<dbReference type="HOGENOM" id="CLU_062974_2_2_4"/>
<dbReference type="Proteomes" id="UP000000231">
    <property type="component" value="Chromosome"/>
</dbReference>
<dbReference type="GO" id="GO:0005829">
    <property type="term" value="C:cytosol"/>
    <property type="evidence" value="ECO:0007669"/>
    <property type="project" value="TreeGrafter"/>
</dbReference>
<dbReference type="GO" id="GO:0003677">
    <property type="term" value="F:DNA binding"/>
    <property type="evidence" value="ECO:0007669"/>
    <property type="project" value="UniProtKB-UniRule"/>
</dbReference>
<dbReference type="GO" id="GO:0006355">
    <property type="term" value="P:regulation of DNA-templated transcription"/>
    <property type="evidence" value="ECO:0007669"/>
    <property type="project" value="UniProtKB-UniRule"/>
</dbReference>
<dbReference type="FunFam" id="1.10.10.200:FF:000001">
    <property type="entry name" value="Probable transcriptional regulatory protein YebC"/>
    <property type="match status" value="1"/>
</dbReference>
<dbReference type="FunFam" id="3.30.70.980:FF:000002">
    <property type="entry name" value="Probable transcriptional regulatory protein YebC"/>
    <property type="match status" value="1"/>
</dbReference>
<dbReference type="Gene3D" id="1.10.10.200">
    <property type="match status" value="1"/>
</dbReference>
<dbReference type="Gene3D" id="3.30.70.980">
    <property type="match status" value="2"/>
</dbReference>
<dbReference type="HAMAP" id="MF_00693">
    <property type="entry name" value="Transcrip_reg_TACO1"/>
    <property type="match status" value="1"/>
</dbReference>
<dbReference type="InterPro" id="IPR017856">
    <property type="entry name" value="Integrase-like_N"/>
</dbReference>
<dbReference type="InterPro" id="IPR048300">
    <property type="entry name" value="TACO1_YebC-like_2nd/3rd_dom"/>
</dbReference>
<dbReference type="InterPro" id="IPR049083">
    <property type="entry name" value="TACO1_YebC_N"/>
</dbReference>
<dbReference type="InterPro" id="IPR002876">
    <property type="entry name" value="Transcrip_reg_TACO1-like"/>
</dbReference>
<dbReference type="InterPro" id="IPR026564">
    <property type="entry name" value="Transcrip_reg_TACO1-like_dom3"/>
</dbReference>
<dbReference type="InterPro" id="IPR029072">
    <property type="entry name" value="YebC-like"/>
</dbReference>
<dbReference type="NCBIfam" id="NF001030">
    <property type="entry name" value="PRK00110.1"/>
    <property type="match status" value="1"/>
</dbReference>
<dbReference type="NCBIfam" id="NF009044">
    <property type="entry name" value="PRK12378.1"/>
    <property type="match status" value="1"/>
</dbReference>
<dbReference type="NCBIfam" id="TIGR01033">
    <property type="entry name" value="YebC/PmpR family DNA-binding transcriptional regulator"/>
    <property type="match status" value="1"/>
</dbReference>
<dbReference type="PANTHER" id="PTHR12532:SF6">
    <property type="entry name" value="TRANSCRIPTIONAL REGULATORY PROTEIN YEBC-RELATED"/>
    <property type="match status" value="1"/>
</dbReference>
<dbReference type="PANTHER" id="PTHR12532">
    <property type="entry name" value="TRANSLATIONAL ACTIVATOR OF CYTOCHROME C OXIDASE 1"/>
    <property type="match status" value="1"/>
</dbReference>
<dbReference type="Pfam" id="PF20772">
    <property type="entry name" value="TACO1_YebC_N"/>
    <property type="match status" value="1"/>
</dbReference>
<dbReference type="Pfam" id="PF01709">
    <property type="entry name" value="Transcrip_reg"/>
    <property type="match status" value="1"/>
</dbReference>
<dbReference type="SUPFAM" id="SSF75625">
    <property type="entry name" value="YebC-like"/>
    <property type="match status" value="1"/>
</dbReference>
<accession>A4SWH2</accession>
<keyword id="KW-0963">Cytoplasm</keyword>
<keyword id="KW-0238">DNA-binding</keyword>
<keyword id="KW-1185">Reference proteome</keyword>
<keyword id="KW-0804">Transcription</keyword>
<keyword id="KW-0805">Transcription regulation</keyword>
<sequence length="239" mass="25970">MAGHSKWANIQHRKGRQDEKRGKIWTKLIKEITVAAKMGGGDLTANPRLRLAIDKAKDANMPNDNVQRAIQRGTGSLEGVNYEEIRYEGYGMNGAAIIVDCLTDNRTRTVAEVRHAFNKNGGNMGTEGSVAFLFKHCGQMLFAPGTSEDQLMEVALDAGAEDVITHDDGSLEVLTPVPDFSKVQDAISQAGLKAELATVAMRPETEIALEGDQAESMQKLLDALENLDDVQEVFTNAAL</sequence>
<name>Y618_POLAQ</name>
<evidence type="ECO:0000255" key="1">
    <source>
        <dbReference type="HAMAP-Rule" id="MF_00693"/>
    </source>
</evidence>
<evidence type="ECO:0000256" key="2">
    <source>
        <dbReference type="SAM" id="MobiDB-lite"/>
    </source>
</evidence>
<feature type="chain" id="PRO_1000083164" description="Probable transcriptional regulatory protein Pnuc_0618">
    <location>
        <begin position="1"/>
        <end position="239"/>
    </location>
</feature>
<feature type="region of interest" description="Disordered" evidence="2">
    <location>
        <begin position="1"/>
        <end position="21"/>
    </location>
</feature>
<gene>
    <name type="ordered locus">Pnuc_0618</name>
</gene>
<reference key="1">
    <citation type="journal article" date="2012" name="Stand. Genomic Sci.">
        <title>Complete genome sequence of Polynucleobacter necessarius subsp. asymbioticus type strain (QLW-P1DMWA-1(T)).</title>
        <authorList>
            <person name="Meincke L."/>
            <person name="Copeland A."/>
            <person name="Lapidus A."/>
            <person name="Lucas S."/>
            <person name="Berry K.W."/>
            <person name="Del Rio T.G."/>
            <person name="Hammon N."/>
            <person name="Dalin E."/>
            <person name="Tice H."/>
            <person name="Pitluck S."/>
            <person name="Richardson P."/>
            <person name="Bruce D."/>
            <person name="Goodwin L."/>
            <person name="Han C."/>
            <person name="Tapia R."/>
            <person name="Detter J.C."/>
            <person name="Schmutz J."/>
            <person name="Brettin T."/>
            <person name="Larimer F."/>
            <person name="Land M."/>
            <person name="Hauser L."/>
            <person name="Kyrpides N.C."/>
            <person name="Ivanova N."/>
            <person name="Goker M."/>
            <person name="Woyke T."/>
            <person name="Wu Q.L."/>
            <person name="Pockl M."/>
            <person name="Hahn M.W."/>
            <person name="Klenk H.P."/>
        </authorList>
    </citation>
    <scope>NUCLEOTIDE SEQUENCE [LARGE SCALE GENOMIC DNA]</scope>
    <source>
        <strain>DSM 18221 / CIP 109841 / QLW-P1DMWA-1</strain>
    </source>
</reference>
<comment type="subcellular location">
    <subcellularLocation>
        <location evidence="1">Cytoplasm</location>
    </subcellularLocation>
</comment>
<comment type="similarity">
    <text evidence="1">Belongs to the TACO1 family.</text>
</comment>
<protein>
    <recommendedName>
        <fullName evidence="1">Probable transcriptional regulatory protein Pnuc_0618</fullName>
    </recommendedName>
</protein>
<organism>
    <name type="scientific">Polynucleobacter asymbioticus (strain DSM 18221 / CIP 109841 / QLW-P1DMWA-1)</name>
    <name type="common">Polynucleobacter necessarius subsp. asymbioticus</name>
    <dbReference type="NCBI Taxonomy" id="312153"/>
    <lineage>
        <taxon>Bacteria</taxon>
        <taxon>Pseudomonadati</taxon>
        <taxon>Pseudomonadota</taxon>
        <taxon>Betaproteobacteria</taxon>
        <taxon>Burkholderiales</taxon>
        <taxon>Burkholderiaceae</taxon>
        <taxon>Polynucleobacter</taxon>
    </lineage>
</organism>
<proteinExistence type="inferred from homology"/>